<organism>
    <name type="scientific">Streptococcus mutans serotype c (strain ATCC 700610 / UA159)</name>
    <dbReference type="NCBI Taxonomy" id="210007"/>
    <lineage>
        <taxon>Bacteria</taxon>
        <taxon>Bacillati</taxon>
        <taxon>Bacillota</taxon>
        <taxon>Bacilli</taxon>
        <taxon>Lactobacillales</taxon>
        <taxon>Streptococcaceae</taxon>
        <taxon>Streptococcus</taxon>
    </lineage>
</organism>
<proteinExistence type="predicted"/>
<evidence type="ECO:0000255" key="1">
    <source>
        <dbReference type="PROSITE-ProRule" id="PRU00593"/>
    </source>
</evidence>
<evidence type="ECO:0000305" key="2"/>
<name>MSMR_STRMU</name>
<accession>Q00753</accession>
<comment type="function">
    <text>Regulatory protein for the msm operon for multiple sugar metabolism. Activates the transcription of the msmEFGK, aga, dexB and gftA genes.</text>
</comment>
<dbReference type="EMBL" id="M77351">
    <property type="protein sequence ID" value="AAA26932.1"/>
    <property type="molecule type" value="Genomic_DNA"/>
</dbReference>
<dbReference type="EMBL" id="AE014133">
    <property type="protein sequence ID" value="AAN58591.1"/>
    <property type="molecule type" value="Genomic_DNA"/>
</dbReference>
<dbReference type="RefSeq" id="NP_721285.1">
    <property type="nucleotide sequence ID" value="NC_004350.2"/>
</dbReference>
<dbReference type="RefSeq" id="WP_002262870.1">
    <property type="nucleotide sequence ID" value="NC_004350.2"/>
</dbReference>
<dbReference type="SMR" id="Q00753"/>
<dbReference type="STRING" id="210007.SMU_876"/>
<dbReference type="DNASU" id="1028226"/>
<dbReference type="KEGG" id="smu:SMU_876"/>
<dbReference type="PATRIC" id="fig|210007.7.peg.782"/>
<dbReference type="eggNOG" id="COG2207">
    <property type="taxonomic scope" value="Bacteria"/>
</dbReference>
<dbReference type="HOGENOM" id="CLU_000445_88_6_9"/>
<dbReference type="OrthoDB" id="9813413at2"/>
<dbReference type="PhylomeDB" id="Q00753"/>
<dbReference type="Proteomes" id="UP000002512">
    <property type="component" value="Chromosome"/>
</dbReference>
<dbReference type="GO" id="GO:0003700">
    <property type="term" value="F:DNA-binding transcription factor activity"/>
    <property type="evidence" value="ECO:0007669"/>
    <property type="project" value="InterPro"/>
</dbReference>
<dbReference type="GO" id="GO:0043565">
    <property type="term" value="F:sequence-specific DNA binding"/>
    <property type="evidence" value="ECO:0007669"/>
    <property type="project" value="InterPro"/>
</dbReference>
<dbReference type="CDD" id="cd06986">
    <property type="entry name" value="cupin_MmsR-like_N"/>
    <property type="match status" value="1"/>
</dbReference>
<dbReference type="Gene3D" id="1.10.10.60">
    <property type="entry name" value="Homeodomain-like"/>
    <property type="match status" value="2"/>
</dbReference>
<dbReference type="Gene3D" id="2.60.120.280">
    <property type="entry name" value="Regulatory protein AraC"/>
    <property type="match status" value="1"/>
</dbReference>
<dbReference type="InterPro" id="IPR003313">
    <property type="entry name" value="AraC-bd"/>
</dbReference>
<dbReference type="InterPro" id="IPR009057">
    <property type="entry name" value="Homeodomain-like_sf"/>
</dbReference>
<dbReference type="InterPro" id="IPR037923">
    <property type="entry name" value="HTH-like"/>
</dbReference>
<dbReference type="InterPro" id="IPR018060">
    <property type="entry name" value="HTH_AraC"/>
</dbReference>
<dbReference type="InterPro" id="IPR018062">
    <property type="entry name" value="HTH_AraC-typ_CS"/>
</dbReference>
<dbReference type="InterPro" id="IPR020449">
    <property type="entry name" value="Tscrpt_reg_AraC-type_HTH"/>
</dbReference>
<dbReference type="PANTHER" id="PTHR43280">
    <property type="entry name" value="ARAC-FAMILY TRANSCRIPTIONAL REGULATOR"/>
    <property type="match status" value="1"/>
</dbReference>
<dbReference type="PANTHER" id="PTHR43280:SF30">
    <property type="entry name" value="MMSAB OPERON REGULATORY PROTEIN"/>
    <property type="match status" value="1"/>
</dbReference>
<dbReference type="Pfam" id="PF02311">
    <property type="entry name" value="AraC_binding"/>
    <property type="match status" value="1"/>
</dbReference>
<dbReference type="Pfam" id="PF12833">
    <property type="entry name" value="HTH_18"/>
    <property type="match status" value="1"/>
</dbReference>
<dbReference type="PRINTS" id="PR00032">
    <property type="entry name" value="HTHARAC"/>
</dbReference>
<dbReference type="SMART" id="SM00342">
    <property type="entry name" value="HTH_ARAC"/>
    <property type="match status" value="1"/>
</dbReference>
<dbReference type="SUPFAM" id="SSF46689">
    <property type="entry name" value="Homeodomain-like"/>
    <property type="match status" value="2"/>
</dbReference>
<dbReference type="SUPFAM" id="SSF51215">
    <property type="entry name" value="Regulatory protein AraC"/>
    <property type="match status" value="1"/>
</dbReference>
<dbReference type="PROSITE" id="PS00041">
    <property type="entry name" value="HTH_ARAC_FAMILY_1"/>
    <property type="match status" value="1"/>
</dbReference>
<dbReference type="PROSITE" id="PS01124">
    <property type="entry name" value="HTH_ARAC_FAMILY_2"/>
    <property type="match status" value="1"/>
</dbReference>
<keyword id="KW-0010">Activator</keyword>
<keyword id="KW-0238">DNA-binding</keyword>
<keyword id="KW-1185">Reference proteome</keyword>
<keyword id="KW-0804">Transcription</keyword>
<keyword id="KW-0805">Transcription regulation</keyword>
<sequence>MNILNIYNEFDINNFDLSVDHYGSEKCDRGYSFGPTIRDNYVIHFILEGKGKLTINQHTLDLAAGDIFLLPKDISTFYQADLQMPWSYIWIGFSGSKAENILKQSSLFKRFYCHSGRSSKLFSQMMTIIQFANTPLTSVNELLMVGELYKLLAALIEEFPLSHLEESNSSTKAYVNQVKKIIHSQYGSSLRVNDIAKKLNLSRSYLYKIFRKSTNLSIKEYILQVRMKRSQYLLENPKLSIAEISNSVGFSDSLAFSKAFKNYFGKSPSKFRKEIQNN</sequence>
<feature type="chain" id="PRO_0000194540" description="Msm operon regulatory protein">
    <location>
        <begin position="1"/>
        <end position="278"/>
    </location>
</feature>
<feature type="domain" description="HTH araC/xylS-type" evidence="1">
    <location>
        <begin position="176"/>
        <end position="274"/>
    </location>
</feature>
<feature type="DNA-binding region" description="H-T-H motif" evidence="1">
    <location>
        <begin position="193"/>
        <end position="214"/>
    </location>
</feature>
<feature type="DNA-binding region" description="H-T-H motif" evidence="1">
    <location>
        <begin position="241"/>
        <end position="264"/>
    </location>
</feature>
<feature type="sequence conflict" description="In Ref. 1; AAA26932." evidence="2" ref="1">
    <original>L</original>
    <variation>V</variation>
    <location>
        <position position="4"/>
    </location>
</feature>
<feature type="sequence conflict" description="In Ref. 1; AAA26932." evidence="2" ref="1">
    <original>SGSKAENILKQSSLFKR</original>
    <variation>RVQKPKIFLSSQAFLNL</variation>
    <location>
        <begin position="94"/>
        <end position="110"/>
    </location>
</feature>
<gene>
    <name type="primary">msmR</name>
    <name type="ordered locus">SMU_876</name>
</gene>
<protein>
    <recommendedName>
        <fullName>Msm operon regulatory protein</fullName>
    </recommendedName>
</protein>
<reference key="1">
    <citation type="journal article" date="1992" name="J. Biol. Chem.">
        <title>A binding protein-dependent transport system in Streptococcus mutans responsible for multiple sugar metabolism.</title>
        <authorList>
            <person name="Russell R.R.B."/>
            <person name="Aduse-Opoku J."/>
            <person name="Sutcliffe I.C."/>
            <person name="Tao L."/>
            <person name="Ferretti J.J."/>
        </authorList>
    </citation>
    <scope>NUCLEOTIDE SEQUENCE [GENOMIC DNA]</scope>
    <source>
        <strain>Ingbritt</strain>
    </source>
</reference>
<reference key="2">
    <citation type="journal article" date="2002" name="Proc. Natl. Acad. Sci. U.S.A.">
        <title>Genome sequence of Streptococcus mutans UA159, a cariogenic dental pathogen.</title>
        <authorList>
            <person name="Ajdic D.J."/>
            <person name="McShan W.M."/>
            <person name="McLaughlin R.E."/>
            <person name="Savic G."/>
            <person name="Chang J."/>
            <person name="Carson M.B."/>
            <person name="Primeaux C."/>
            <person name="Tian R."/>
            <person name="Kenton S."/>
            <person name="Jia H.G."/>
            <person name="Lin S.P."/>
            <person name="Qian Y."/>
            <person name="Li S."/>
            <person name="Zhu H."/>
            <person name="Najar F.Z."/>
            <person name="Lai H."/>
            <person name="White J."/>
            <person name="Roe B.A."/>
            <person name="Ferretti J.J."/>
        </authorList>
    </citation>
    <scope>NUCLEOTIDE SEQUENCE [LARGE SCALE GENOMIC DNA]</scope>
    <source>
        <strain>ATCC 700610 / UA159</strain>
    </source>
</reference>